<accession>O84123</accession>
<name>RPE_CHLTR</name>
<keyword id="KW-0119">Carbohydrate metabolism</keyword>
<keyword id="KW-0413">Isomerase</keyword>
<keyword id="KW-0479">Metal-binding</keyword>
<keyword id="KW-1185">Reference proteome</keyword>
<dbReference type="EC" id="5.1.3.1" evidence="1"/>
<dbReference type="EMBL" id="AE001273">
    <property type="protein sequence ID" value="AAC67712.1"/>
    <property type="molecule type" value="Genomic_DNA"/>
</dbReference>
<dbReference type="PIR" id="E71553">
    <property type="entry name" value="E71553"/>
</dbReference>
<dbReference type="RefSeq" id="WP_010725075.1">
    <property type="nucleotide sequence ID" value="NC_000117.1"/>
</dbReference>
<dbReference type="SMR" id="O84123"/>
<dbReference type="FunCoup" id="O84123">
    <property type="interactions" value="274"/>
</dbReference>
<dbReference type="STRING" id="272561.CT_121"/>
<dbReference type="EnsemblBacteria" id="AAC67712">
    <property type="protein sequence ID" value="AAC67712"/>
    <property type="gene ID" value="CT_121"/>
</dbReference>
<dbReference type="KEGG" id="ctr:CT_121"/>
<dbReference type="PATRIC" id="fig|272561.5.peg.133"/>
<dbReference type="HOGENOM" id="CLU_054856_2_1_0"/>
<dbReference type="InParanoid" id="O84123"/>
<dbReference type="OrthoDB" id="1645589at2"/>
<dbReference type="Proteomes" id="UP000000431">
    <property type="component" value="Chromosome"/>
</dbReference>
<dbReference type="GO" id="GO:0005829">
    <property type="term" value="C:cytosol"/>
    <property type="evidence" value="ECO:0000318"/>
    <property type="project" value="GO_Central"/>
</dbReference>
<dbReference type="GO" id="GO:0004750">
    <property type="term" value="F:D-ribulose-phosphate 3-epimerase activity"/>
    <property type="evidence" value="ECO:0000318"/>
    <property type="project" value="GO_Central"/>
</dbReference>
<dbReference type="GO" id="GO:0046872">
    <property type="term" value="F:metal ion binding"/>
    <property type="evidence" value="ECO:0000318"/>
    <property type="project" value="GO_Central"/>
</dbReference>
<dbReference type="GO" id="GO:0005975">
    <property type="term" value="P:carbohydrate metabolic process"/>
    <property type="evidence" value="ECO:0000318"/>
    <property type="project" value="GO_Central"/>
</dbReference>
<dbReference type="GO" id="GO:0019323">
    <property type="term" value="P:pentose catabolic process"/>
    <property type="evidence" value="ECO:0007669"/>
    <property type="project" value="UniProtKB-UniRule"/>
</dbReference>
<dbReference type="GO" id="GO:0009052">
    <property type="term" value="P:pentose-phosphate shunt, non-oxidative branch"/>
    <property type="evidence" value="ECO:0000318"/>
    <property type="project" value="GO_Central"/>
</dbReference>
<dbReference type="CDD" id="cd00429">
    <property type="entry name" value="RPE"/>
    <property type="match status" value="1"/>
</dbReference>
<dbReference type="FunFam" id="3.20.20.70:FF:000004">
    <property type="entry name" value="Ribulose-phosphate 3-epimerase"/>
    <property type="match status" value="1"/>
</dbReference>
<dbReference type="Gene3D" id="3.20.20.70">
    <property type="entry name" value="Aldolase class I"/>
    <property type="match status" value="1"/>
</dbReference>
<dbReference type="HAMAP" id="MF_02227">
    <property type="entry name" value="RPE"/>
    <property type="match status" value="1"/>
</dbReference>
<dbReference type="InterPro" id="IPR013785">
    <property type="entry name" value="Aldolase_TIM"/>
</dbReference>
<dbReference type="InterPro" id="IPR026019">
    <property type="entry name" value="Ribul_P_3_epim"/>
</dbReference>
<dbReference type="InterPro" id="IPR000056">
    <property type="entry name" value="Ribul_P_3_epim-like"/>
</dbReference>
<dbReference type="InterPro" id="IPR011060">
    <property type="entry name" value="RibuloseP-bd_barrel"/>
</dbReference>
<dbReference type="NCBIfam" id="NF004076">
    <property type="entry name" value="PRK05581.1-4"/>
    <property type="match status" value="1"/>
</dbReference>
<dbReference type="NCBIfam" id="TIGR01163">
    <property type="entry name" value="rpe"/>
    <property type="match status" value="1"/>
</dbReference>
<dbReference type="PANTHER" id="PTHR11749">
    <property type="entry name" value="RIBULOSE-5-PHOSPHATE-3-EPIMERASE"/>
    <property type="match status" value="1"/>
</dbReference>
<dbReference type="Pfam" id="PF00834">
    <property type="entry name" value="Ribul_P_3_epim"/>
    <property type="match status" value="1"/>
</dbReference>
<dbReference type="PIRSF" id="PIRSF001461">
    <property type="entry name" value="RPE"/>
    <property type="match status" value="1"/>
</dbReference>
<dbReference type="SUPFAM" id="SSF51366">
    <property type="entry name" value="Ribulose-phoshate binding barrel"/>
    <property type="match status" value="1"/>
</dbReference>
<dbReference type="PROSITE" id="PS01085">
    <property type="entry name" value="RIBUL_P_3_EPIMER_1"/>
    <property type="match status" value="1"/>
</dbReference>
<dbReference type="PROSITE" id="PS01086">
    <property type="entry name" value="RIBUL_P_3_EPIMER_2"/>
    <property type="match status" value="1"/>
</dbReference>
<proteinExistence type="inferred from homology"/>
<protein>
    <recommendedName>
        <fullName evidence="1">Ribulose-phosphate 3-epimerase</fullName>
        <ecNumber evidence="1">5.1.3.1</ecNumber>
    </recommendedName>
</protein>
<reference key="1">
    <citation type="journal article" date="1998" name="Science">
        <title>Genome sequence of an obligate intracellular pathogen of humans: Chlamydia trachomatis.</title>
        <authorList>
            <person name="Stephens R.S."/>
            <person name="Kalman S."/>
            <person name="Lammel C.J."/>
            <person name="Fan J."/>
            <person name="Marathe R."/>
            <person name="Aravind L."/>
            <person name="Mitchell W.P."/>
            <person name="Olinger L."/>
            <person name="Tatusov R.L."/>
            <person name="Zhao Q."/>
            <person name="Koonin E.V."/>
            <person name="Davis R.W."/>
        </authorList>
    </citation>
    <scope>NUCLEOTIDE SEQUENCE [LARGE SCALE GENOMIC DNA]</scope>
    <source>
        <strain>ATCC VR-885 / DSM 19411 / UW-3/Cx</strain>
    </source>
</reference>
<feature type="chain" id="PRO_0000171567" description="Ribulose-phosphate 3-epimerase">
    <location>
        <begin position="1"/>
        <end position="233"/>
    </location>
</feature>
<feature type="active site" description="Proton acceptor" evidence="1">
    <location>
        <position position="43"/>
    </location>
</feature>
<feature type="active site" description="Proton donor" evidence="1">
    <location>
        <position position="185"/>
    </location>
</feature>
<feature type="binding site" evidence="1">
    <location>
        <position position="16"/>
    </location>
    <ligand>
        <name>substrate</name>
    </ligand>
</feature>
<feature type="binding site" evidence="1">
    <location>
        <position position="41"/>
    </location>
    <ligand>
        <name>a divalent metal cation</name>
        <dbReference type="ChEBI" id="CHEBI:60240"/>
    </ligand>
</feature>
<feature type="binding site" evidence="1">
    <location>
        <position position="43"/>
    </location>
    <ligand>
        <name>a divalent metal cation</name>
        <dbReference type="ChEBI" id="CHEBI:60240"/>
    </ligand>
</feature>
<feature type="binding site" evidence="1">
    <location>
        <position position="74"/>
    </location>
    <ligand>
        <name>a divalent metal cation</name>
        <dbReference type="ChEBI" id="CHEBI:60240"/>
    </ligand>
</feature>
<feature type="binding site" evidence="1">
    <location>
        <position position="74"/>
    </location>
    <ligand>
        <name>substrate</name>
    </ligand>
</feature>
<feature type="binding site" evidence="1">
    <location>
        <begin position="150"/>
        <end position="153"/>
    </location>
    <ligand>
        <name>substrate</name>
    </ligand>
</feature>
<feature type="binding site" evidence="1">
    <location>
        <begin position="185"/>
        <end position="187"/>
    </location>
    <ligand>
        <name>substrate</name>
    </ligand>
</feature>
<feature type="binding site" evidence="1">
    <location>
        <position position="185"/>
    </location>
    <ligand>
        <name>a divalent metal cation</name>
        <dbReference type="ChEBI" id="CHEBI:60240"/>
    </ligand>
</feature>
<feature type="binding site" evidence="1">
    <location>
        <begin position="207"/>
        <end position="208"/>
    </location>
    <ligand>
        <name>substrate</name>
    </ligand>
</feature>
<evidence type="ECO:0000255" key="1">
    <source>
        <dbReference type="HAMAP-Rule" id="MF_02227"/>
    </source>
</evidence>
<gene>
    <name evidence="1" type="primary">rpe</name>
    <name type="ordered locus">CT_121</name>
</gene>
<comment type="function">
    <text evidence="1">Catalyzes the reversible epimerization of D-ribulose 5-phosphate to D-xylulose 5-phosphate.</text>
</comment>
<comment type="catalytic activity">
    <reaction evidence="1">
        <text>D-ribulose 5-phosphate = D-xylulose 5-phosphate</text>
        <dbReference type="Rhea" id="RHEA:13677"/>
        <dbReference type="ChEBI" id="CHEBI:57737"/>
        <dbReference type="ChEBI" id="CHEBI:58121"/>
        <dbReference type="EC" id="5.1.3.1"/>
    </reaction>
</comment>
<comment type="cofactor">
    <cofactor evidence="1">
        <name>a divalent metal cation</name>
        <dbReference type="ChEBI" id="CHEBI:60240"/>
    </cofactor>
    <text evidence="1">Binds 1 divalent metal cation per subunit.</text>
</comment>
<comment type="pathway">
    <text evidence="1">Carbohydrate degradation.</text>
</comment>
<comment type="similarity">
    <text evidence="1">Belongs to the ribulose-phosphate 3-epimerase family.</text>
</comment>
<sequence>MREEAMKKQGVLVAPSIMGADLACIGREARNIEESGADLIHIDVMDGHFVPNITFGPGVVAAINRSTELFLEVHAMIYTPFEFVEAFVKAGADRIIVHFEAAENIKEIISYIQKCGVQAGVAFSPETSIEFVTSFIPLCDVILLMSVHPGFCGQKFIPDTIERIQFVKQAIQVLGREGSCLIEVDGGIDKESARACREAGADILVAASYFFEKDSINMKEKVLLLQGEEHGAK</sequence>
<organism>
    <name type="scientific">Chlamydia trachomatis serovar D (strain ATCC VR-885 / DSM 19411 / UW-3/Cx)</name>
    <dbReference type="NCBI Taxonomy" id="272561"/>
    <lineage>
        <taxon>Bacteria</taxon>
        <taxon>Pseudomonadati</taxon>
        <taxon>Chlamydiota</taxon>
        <taxon>Chlamydiia</taxon>
        <taxon>Chlamydiales</taxon>
        <taxon>Chlamydiaceae</taxon>
        <taxon>Chlamydia/Chlamydophila group</taxon>
        <taxon>Chlamydia</taxon>
    </lineage>
</organism>